<sequence length="684" mass="79568">MSLWPPFRCRWKLAPRYSRRASPQQPQQDFEALLAECLRNGCLFEDTSFPATLSSIGSGSLLQKLPPRLQWKRPPELHSNPQFYFAKAKRLDLCQGIVGDCWFLAALQALALHQDILSRVVPLNQSFTEKYAGIFRFWFWHYGNWVPVVIDDRLPVNEAGQLVFVSSTYKNLFWGALLEKAYAKLSGSYEDLQSGQVSEALVDFTGGVTMTINLAEAHGNLWDILIEATYNRTLIGCQTHSGEKILENGLVEGHAYTLTGIRKVTCKHRPEYLVKLRNPWGKVEWKGDWSDSSSKWELLSPKEKILLLRKDNDGEFWMTLQDFKTHFVLLVICKLTPGLLSQEAAQKWTYTMREGRWEKRSTAGGQRQLLQDTFWKNPQFLLSVWRPEEGRRSLRPCSVLVSLLQKPRHRCRKRKPLLAIGFYLYRMNKYHDDQRRLPPEFFQRNTPLSQPDRFLKEKEVSQELCLEPGTYLIVPCILEAHQKSEFVLRVFSRKHIFYEIGSNSGVVFSKEIEDQNERQDEFFTKFFEKHPEINAVQLQNLLNQMTWSSLGSRQPFFSLEACQGILALLDLNASGTMSIQEFRDLWKQLKLSQKVFHKQDRGSGYLNWEQLHAAMREAGIMLSDDVCQLMLIRYGGPRLQMDFVSFIHLMLRVENMEDVFQNLTQDGKGIYLQKPEWMMMALYS</sequence>
<reference key="1">
    <citation type="journal article" date="2004" name="Nat. Genet.">
        <title>Complete sequencing and characterization of 21,243 full-length human cDNAs.</title>
        <authorList>
            <person name="Ota T."/>
            <person name="Suzuki Y."/>
            <person name="Nishikawa T."/>
            <person name="Otsuki T."/>
            <person name="Sugiyama T."/>
            <person name="Irie R."/>
            <person name="Wakamatsu A."/>
            <person name="Hayashi K."/>
            <person name="Sato H."/>
            <person name="Nagai K."/>
            <person name="Kimura K."/>
            <person name="Makita H."/>
            <person name="Sekine M."/>
            <person name="Obayashi M."/>
            <person name="Nishi T."/>
            <person name="Shibahara T."/>
            <person name="Tanaka T."/>
            <person name="Ishii S."/>
            <person name="Yamamoto J."/>
            <person name="Saito K."/>
            <person name="Kawai Y."/>
            <person name="Isono Y."/>
            <person name="Nakamura Y."/>
            <person name="Nagahari K."/>
            <person name="Murakami K."/>
            <person name="Yasuda T."/>
            <person name="Iwayanagi T."/>
            <person name="Wagatsuma M."/>
            <person name="Shiratori A."/>
            <person name="Sudo H."/>
            <person name="Hosoiri T."/>
            <person name="Kaku Y."/>
            <person name="Kodaira H."/>
            <person name="Kondo H."/>
            <person name="Sugawara M."/>
            <person name="Takahashi M."/>
            <person name="Kanda K."/>
            <person name="Yokoi T."/>
            <person name="Furuya T."/>
            <person name="Kikkawa E."/>
            <person name="Omura Y."/>
            <person name="Abe K."/>
            <person name="Kamihara K."/>
            <person name="Katsuta N."/>
            <person name="Sato K."/>
            <person name="Tanikawa M."/>
            <person name="Yamazaki M."/>
            <person name="Ninomiya K."/>
            <person name="Ishibashi T."/>
            <person name="Yamashita H."/>
            <person name="Murakawa K."/>
            <person name="Fujimori K."/>
            <person name="Tanai H."/>
            <person name="Kimata M."/>
            <person name="Watanabe M."/>
            <person name="Hiraoka S."/>
            <person name="Chiba Y."/>
            <person name="Ishida S."/>
            <person name="Ono Y."/>
            <person name="Takiguchi S."/>
            <person name="Watanabe S."/>
            <person name="Yosida M."/>
            <person name="Hotuta T."/>
            <person name="Kusano J."/>
            <person name="Kanehori K."/>
            <person name="Takahashi-Fujii A."/>
            <person name="Hara H."/>
            <person name="Tanase T.-O."/>
            <person name="Nomura Y."/>
            <person name="Togiya S."/>
            <person name="Komai F."/>
            <person name="Hara R."/>
            <person name="Takeuchi K."/>
            <person name="Arita M."/>
            <person name="Imose N."/>
            <person name="Musashino K."/>
            <person name="Yuuki H."/>
            <person name="Oshima A."/>
            <person name="Sasaki N."/>
            <person name="Aotsuka S."/>
            <person name="Yoshikawa Y."/>
            <person name="Matsunawa H."/>
            <person name="Ichihara T."/>
            <person name="Shiohata N."/>
            <person name="Sano S."/>
            <person name="Moriya S."/>
            <person name="Momiyama H."/>
            <person name="Satoh N."/>
            <person name="Takami S."/>
            <person name="Terashima Y."/>
            <person name="Suzuki O."/>
            <person name="Nakagawa S."/>
            <person name="Senoh A."/>
            <person name="Mizoguchi H."/>
            <person name="Goto Y."/>
            <person name="Shimizu F."/>
            <person name="Wakebe H."/>
            <person name="Hishigaki H."/>
            <person name="Watanabe T."/>
            <person name="Sugiyama A."/>
            <person name="Takemoto M."/>
            <person name="Kawakami B."/>
            <person name="Yamazaki M."/>
            <person name="Watanabe K."/>
            <person name="Kumagai A."/>
            <person name="Itakura S."/>
            <person name="Fukuzumi Y."/>
            <person name="Fujimori Y."/>
            <person name="Komiyama M."/>
            <person name="Tashiro H."/>
            <person name="Tanigami A."/>
            <person name="Fujiwara T."/>
            <person name="Ono T."/>
            <person name="Yamada K."/>
            <person name="Fujii Y."/>
            <person name="Ozaki K."/>
            <person name="Hirao M."/>
            <person name="Ohmori Y."/>
            <person name="Kawabata A."/>
            <person name="Hikiji T."/>
            <person name="Kobatake N."/>
            <person name="Inagaki H."/>
            <person name="Ikema Y."/>
            <person name="Okamoto S."/>
            <person name="Okitani R."/>
            <person name="Kawakami T."/>
            <person name="Noguchi S."/>
            <person name="Itoh T."/>
            <person name="Shigeta K."/>
            <person name="Senba T."/>
            <person name="Matsumura K."/>
            <person name="Nakajima Y."/>
            <person name="Mizuno T."/>
            <person name="Morinaga M."/>
            <person name="Sasaki M."/>
            <person name="Togashi T."/>
            <person name="Oyama M."/>
            <person name="Hata H."/>
            <person name="Watanabe M."/>
            <person name="Komatsu T."/>
            <person name="Mizushima-Sugano J."/>
            <person name="Satoh T."/>
            <person name="Shirai Y."/>
            <person name="Takahashi Y."/>
            <person name="Nakagawa K."/>
            <person name="Okumura K."/>
            <person name="Nagase T."/>
            <person name="Nomura N."/>
            <person name="Kikuchi H."/>
            <person name="Masuho Y."/>
            <person name="Yamashita R."/>
            <person name="Nakai K."/>
            <person name="Yada T."/>
            <person name="Nakamura Y."/>
            <person name="Ohara O."/>
            <person name="Isogai T."/>
            <person name="Sugano S."/>
        </authorList>
    </citation>
    <scope>NUCLEOTIDE SEQUENCE [LARGE SCALE MRNA] (ISOFORM 2)</scope>
    <source>
        <tissue>Teratocarcinoma</tissue>
    </source>
</reference>
<reference key="2">
    <citation type="journal article" date="2005" name="Nature">
        <title>Generation and annotation of the DNA sequences of human chromosomes 2 and 4.</title>
        <authorList>
            <person name="Hillier L.W."/>
            <person name="Graves T.A."/>
            <person name="Fulton R.S."/>
            <person name="Fulton L.A."/>
            <person name="Pepin K.H."/>
            <person name="Minx P."/>
            <person name="Wagner-McPherson C."/>
            <person name="Layman D."/>
            <person name="Wylie K."/>
            <person name="Sekhon M."/>
            <person name="Becker M.C."/>
            <person name="Fewell G.A."/>
            <person name="Delehaunty K.D."/>
            <person name="Miner T.L."/>
            <person name="Nash W.E."/>
            <person name="Kremitzki C."/>
            <person name="Oddy L."/>
            <person name="Du H."/>
            <person name="Sun H."/>
            <person name="Bradshaw-Cordum H."/>
            <person name="Ali J."/>
            <person name="Carter J."/>
            <person name="Cordes M."/>
            <person name="Harris A."/>
            <person name="Isak A."/>
            <person name="van Brunt A."/>
            <person name="Nguyen C."/>
            <person name="Du F."/>
            <person name="Courtney L."/>
            <person name="Kalicki J."/>
            <person name="Ozersky P."/>
            <person name="Abbott S."/>
            <person name="Armstrong J."/>
            <person name="Belter E.A."/>
            <person name="Caruso L."/>
            <person name="Cedroni M."/>
            <person name="Cotton M."/>
            <person name="Davidson T."/>
            <person name="Desai A."/>
            <person name="Elliott G."/>
            <person name="Erb T."/>
            <person name="Fronick C."/>
            <person name="Gaige T."/>
            <person name="Haakenson W."/>
            <person name="Haglund K."/>
            <person name="Holmes A."/>
            <person name="Harkins R."/>
            <person name="Kim K."/>
            <person name="Kruchowski S.S."/>
            <person name="Strong C.M."/>
            <person name="Grewal N."/>
            <person name="Goyea E."/>
            <person name="Hou S."/>
            <person name="Levy A."/>
            <person name="Martinka S."/>
            <person name="Mead K."/>
            <person name="McLellan M.D."/>
            <person name="Meyer R."/>
            <person name="Randall-Maher J."/>
            <person name="Tomlinson C."/>
            <person name="Dauphin-Kohlberg S."/>
            <person name="Kozlowicz-Reilly A."/>
            <person name="Shah N."/>
            <person name="Swearengen-Shahid S."/>
            <person name="Snider J."/>
            <person name="Strong J.T."/>
            <person name="Thompson J."/>
            <person name="Yoakum M."/>
            <person name="Leonard S."/>
            <person name="Pearman C."/>
            <person name="Trani L."/>
            <person name="Radionenko M."/>
            <person name="Waligorski J.E."/>
            <person name="Wang C."/>
            <person name="Rock S.M."/>
            <person name="Tin-Wollam A.-M."/>
            <person name="Maupin R."/>
            <person name="Latreille P."/>
            <person name="Wendl M.C."/>
            <person name="Yang S.-P."/>
            <person name="Pohl C."/>
            <person name="Wallis J.W."/>
            <person name="Spieth J."/>
            <person name="Bieri T.A."/>
            <person name="Berkowicz N."/>
            <person name="Nelson J.O."/>
            <person name="Osborne J."/>
            <person name="Ding L."/>
            <person name="Meyer R."/>
            <person name="Sabo A."/>
            <person name="Shotland Y."/>
            <person name="Sinha P."/>
            <person name="Wohldmann P.E."/>
            <person name="Cook L.L."/>
            <person name="Hickenbotham M.T."/>
            <person name="Eldred J."/>
            <person name="Williams D."/>
            <person name="Jones T.A."/>
            <person name="She X."/>
            <person name="Ciccarelli F.D."/>
            <person name="Izaurralde E."/>
            <person name="Taylor J."/>
            <person name="Schmutz J."/>
            <person name="Myers R.M."/>
            <person name="Cox D.R."/>
            <person name="Huang X."/>
            <person name="McPherson J.D."/>
            <person name="Mardis E.R."/>
            <person name="Clifton S.W."/>
            <person name="Warren W.C."/>
            <person name="Chinwalla A.T."/>
            <person name="Eddy S.R."/>
            <person name="Marra M.A."/>
            <person name="Ovcharenko I."/>
            <person name="Furey T.S."/>
            <person name="Miller W."/>
            <person name="Eichler E.E."/>
            <person name="Bork P."/>
            <person name="Suyama M."/>
            <person name="Torrents D."/>
            <person name="Waterston R.H."/>
            <person name="Wilson R.K."/>
        </authorList>
    </citation>
    <scope>NUCLEOTIDE SEQUENCE [LARGE SCALE GENOMIC DNA]</scope>
</reference>
<reference key="3">
    <citation type="journal article" date="2001" name="Gene">
        <title>Identification and characterization of two novel calpain large subunit genes.</title>
        <authorList>
            <person name="Dear T.N."/>
            <person name="Boehm T."/>
        </authorList>
    </citation>
    <scope>IDENTIFICATION</scope>
    <scope>LACK OF TISSUE SPECIFICITY</scope>
</reference>
<proteinExistence type="evidence at protein level"/>
<comment type="function">
    <text evidence="1">Calcium-regulated non-lysosomal thiol-protease.</text>
</comment>
<comment type="alternative products">
    <event type="alternative splicing"/>
    <isoform>
        <id>A8MX76-1</id>
        <name>1</name>
        <sequence type="displayed"/>
    </isoform>
    <isoform>
        <id>A8MX76-2</id>
        <name>2</name>
        <sequence type="described" ref="VSP_034268 VSP_034269"/>
    </isoform>
</comment>
<comment type="tissue specificity">
    <text>Not expressed in tissues tested.</text>
</comment>
<comment type="similarity">
    <text evidence="5">Belongs to the peptidase C2 family.</text>
</comment>
<name>CAN14_HUMAN</name>
<keyword id="KW-0025">Alternative splicing</keyword>
<keyword id="KW-0106">Calcium</keyword>
<keyword id="KW-0378">Hydrolase</keyword>
<keyword id="KW-0479">Metal-binding</keyword>
<keyword id="KW-0645">Protease</keyword>
<keyword id="KW-1267">Proteomics identification</keyword>
<keyword id="KW-1185">Reference proteome</keyword>
<keyword id="KW-0677">Repeat</keyword>
<keyword id="KW-0788">Thiol protease</keyword>
<protein>
    <recommendedName>
        <fullName>Calpain-14</fullName>
        <ecNumber>3.4.22.-</ecNumber>
    </recommendedName>
    <alternativeName>
        <fullName>Calcium-activated neutral proteinase 14</fullName>
        <shortName>CANP 14</shortName>
    </alternativeName>
</protein>
<organism>
    <name type="scientific">Homo sapiens</name>
    <name type="common">Human</name>
    <dbReference type="NCBI Taxonomy" id="9606"/>
    <lineage>
        <taxon>Eukaryota</taxon>
        <taxon>Metazoa</taxon>
        <taxon>Chordata</taxon>
        <taxon>Craniata</taxon>
        <taxon>Vertebrata</taxon>
        <taxon>Euteleostomi</taxon>
        <taxon>Mammalia</taxon>
        <taxon>Eutheria</taxon>
        <taxon>Euarchontoglires</taxon>
        <taxon>Primates</taxon>
        <taxon>Haplorrhini</taxon>
        <taxon>Catarrhini</taxon>
        <taxon>Hominidae</taxon>
        <taxon>Homo</taxon>
    </lineage>
</organism>
<dbReference type="EC" id="3.4.22.-"/>
<dbReference type="EMBL" id="AK092257">
    <property type="protein sequence ID" value="BAG52511.1"/>
    <property type="molecule type" value="mRNA"/>
</dbReference>
<dbReference type="EMBL" id="AC015980">
    <property type="status" value="NOT_ANNOTATED_CDS"/>
    <property type="molecule type" value="Genomic_DNA"/>
</dbReference>
<dbReference type="CCDS" id="CCDS46254.1">
    <molecule id="A8MX76-1"/>
</dbReference>
<dbReference type="RefSeq" id="NP_001138594.1">
    <molecule id="A8MX76-1"/>
    <property type="nucleotide sequence ID" value="NM_001145122.2"/>
</dbReference>
<dbReference type="RefSeq" id="NP_001308199.1">
    <molecule id="A8MX76-2"/>
    <property type="nucleotide sequence ID" value="NM_001321270.2"/>
</dbReference>
<dbReference type="RefSeq" id="XP_011531165.1">
    <property type="nucleotide sequence ID" value="XM_011532863.2"/>
</dbReference>
<dbReference type="RefSeq" id="XP_011531166.1">
    <molecule id="A8MX76-1"/>
    <property type="nucleotide sequence ID" value="XM_011532864.4"/>
</dbReference>
<dbReference type="RefSeq" id="XP_011531167.1">
    <molecule id="A8MX76-1"/>
    <property type="nucleotide sequence ID" value="XM_011532865.2"/>
</dbReference>
<dbReference type="RefSeq" id="XP_011531168.1">
    <property type="nucleotide sequence ID" value="XM_011532866.2"/>
</dbReference>
<dbReference type="RefSeq" id="XP_047300363.1">
    <molecule id="A8MX76-1"/>
    <property type="nucleotide sequence ID" value="XM_047444407.1"/>
</dbReference>
<dbReference type="RefSeq" id="XP_054198105.1">
    <molecule id="A8MX76-1"/>
    <property type="nucleotide sequence ID" value="XM_054342130.1"/>
</dbReference>
<dbReference type="RefSeq" id="XP_054198106.1">
    <molecule id="A8MX76-1"/>
    <property type="nucleotide sequence ID" value="XM_054342131.1"/>
</dbReference>
<dbReference type="RefSeq" id="XP_054198107.1">
    <molecule id="A8MX76-1"/>
    <property type="nucleotide sequence ID" value="XM_054342132.1"/>
</dbReference>
<dbReference type="SMR" id="A8MX76"/>
<dbReference type="BioGRID" id="136950">
    <property type="interactions" value="2"/>
</dbReference>
<dbReference type="FunCoup" id="A8MX76">
    <property type="interactions" value="316"/>
</dbReference>
<dbReference type="STRING" id="9606.ENSP00000385247"/>
<dbReference type="MEROPS" id="C02.021"/>
<dbReference type="iPTMnet" id="A8MX76"/>
<dbReference type="PhosphoSitePlus" id="A8MX76"/>
<dbReference type="BioMuta" id="CAPN14"/>
<dbReference type="MassIVE" id="A8MX76"/>
<dbReference type="PaxDb" id="9606-ENSP00000385247"/>
<dbReference type="PeptideAtlas" id="A8MX76"/>
<dbReference type="ProteomicsDB" id="2300">
    <molecule id="A8MX76-1"/>
</dbReference>
<dbReference type="ProteomicsDB" id="2301">
    <molecule id="A8MX76-2"/>
</dbReference>
<dbReference type="Antibodypedia" id="51640">
    <property type="antibodies" value="38 antibodies from 9 providers"/>
</dbReference>
<dbReference type="DNASU" id="440854"/>
<dbReference type="Ensembl" id="ENST00000403897.4">
    <molecule id="A8MX76-1"/>
    <property type="protein sequence ID" value="ENSP00000385247.3"/>
    <property type="gene ID" value="ENSG00000214711.10"/>
</dbReference>
<dbReference type="GeneID" id="440854"/>
<dbReference type="KEGG" id="hsa:440854"/>
<dbReference type="MANE-Select" id="ENST00000403897.4">
    <property type="protein sequence ID" value="ENSP00000385247.3"/>
    <property type="RefSeq nucleotide sequence ID" value="NM_001145122.2"/>
    <property type="RefSeq protein sequence ID" value="NP_001138594.1"/>
</dbReference>
<dbReference type="UCSC" id="uc010yms.3">
    <molecule id="A8MX76-1"/>
    <property type="organism name" value="human"/>
</dbReference>
<dbReference type="AGR" id="HGNC:16664"/>
<dbReference type="CTD" id="440854"/>
<dbReference type="DisGeNET" id="440854"/>
<dbReference type="GeneCards" id="CAPN14"/>
<dbReference type="HGNC" id="HGNC:16664">
    <property type="gene designation" value="CAPN14"/>
</dbReference>
<dbReference type="HPA" id="ENSG00000214711">
    <property type="expression patterns" value="Tissue enriched (esophagus)"/>
</dbReference>
<dbReference type="MIM" id="610229">
    <property type="type" value="gene"/>
</dbReference>
<dbReference type="neXtProt" id="NX_A8MX76"/>
<dbReference type="OpenTargets" id="ENSG00000214711"/>
<dbReference type="PharmGKB" id="PA134888839"/>
<dbReference type="VEuPathDB" id="HostDB:ENSG00000214711"/>
<dbReference type="eggNOG" id="KOG0045">
    <property type="taxonomic scope" value="Eukaryota"/>
</dbReference>
<dbReference type="GeneTree" id="ENSGT00940000160421"/>
<dbReference type="HOGENOM" id="CLU_010982_0_3_1"/>
<dbReference type="InParanoid" id="A8MX76"/>
<dbReference type="OMA" id="LLNQMTW"/>
<dbReference type="OrthoDB" id="424753at2759"/>
<dbReference type="PAN-GO" id="A8MX76">
    <property type="GO annotations" value="3 GO annotations based on evolutionary models"/>
</dbReference>
<dbReference type="PhylomeDB" id="A8MX76"/>
<dbReference type="TreeFam" id="TF314748"/>
<dbReference type="PathwayCommons" id="A8MX76"/>
<dbReference type="Reactome" id="R-HSA-1474228">
    <property type="pathway name" value="Degradation of the extracellular matrix"/>
</dbReference>
<dbReference type="BioGRID-ORCS" id="440854">
    <property type="hits" value="10 hits in 1141 CRISPR screens"/>
</dbReference>
<dbReference type="GenomeRNAi" id="440854"/>
<dbReference type="Pharos" id="A8MX76">
    <property type="development level" value="Tdark"/>
</dbReference>
<dbReference type="PRO" id="PR:A8MX76"/>
<dbReference type="Proteomes" id="UP000005640">
    <property type="component" value="Chromosome 2"/>
</dbReference>
<dbReference type="RNAct" id="A8MX76">
    <property type="molecule type" value="protein"/>
</dbReference>
<dbReference type="Bgee" id="ENSG00000214711">
    <property type="expression patterns" value="Expressed in lower esophagus mucosa and 77 other cell types or tissues"/>
</dbReference>
<dbReference type="ExpressionAtlas" id="A8MX76">
    <property type="expression patterns" value="baseline and differential"/>
</dbReference>
<dbReference type="GO" id="GO:0005737">
    <property type="term" value="C:cytoplasm"/>
    <property type="evidence" value="ECO:0000318"/>
    <property type="project" value="GO_Central"/>
</dbReference>
<dbReference type="GO" id="GO:0005509">
    <property type="term" value="F:calcium ion binding"/>
    <property type="evidence" value="ECO:0007669"/>
    <property type="project" value="InterPro"/>
</dbReference>
<dbReference type="GO" id="GO:0004198">
    <property type="term" value="F:calcium-dependent cysteine-type endopeptidase activity"/>
    <property type="evidence" value="ECO:0000318"/>
    <property type="project" value="GO_Central"/>
</dbReference>
<dbReference type="GO" id="GO:0006508">
    <property type="term" value="P:proteolysis"/>
    <property type="evidence" value="ECO:0000318"/>
    <property type="project" value="GO_Central"/>
</dbReference>
<dbReference type="CDD" id="cd00214">
    <property type="entry name" value="Calpain_III"/>
    <property type="match status" value="1"/>
</dbReference>
<dbReference type="CDD" id="cd00044">
    <property type="entry name" value="CysPc"/>
    <property type="match status" value="1"/>
</dbReference>
<dbReference type="CDD" id="cd16195">
    <property type="entry name" value="EFh_PEF_CAPN13_14"/>
    <property type="match status" value="1"/>
</dbReference>
<dbReference type="FunFam" id="1.10.238.10:FF:000175">
    <property type="entry name" value="Calpain 14"/>
    <property type="match status" value="1"/>
</dbReference>
<dbReference type="FunFam" id="3.90.70.10:FF:000054">
    <property type="entry name" value="Calpain 14"/>
    <property type="match status" value="1"/>
</dbReference>
<dbReference type="FunFam" id="2.60.120.380:FF:000001">
    <property type="entry name" value="Calpain-1 catalytic subunit"/>
    <property type="match status" value="1"/>
</dbReference>
<dbReference type="Gene3D" id="2.60.120.380">
    <property type="match status" value="1"/>
</dbReference>
<dbReference type="Gene3D" id="3.90.70.10">
    <property type="entry name" value="Cysteine proteinases"/>
    <property type="match status" value="1"/>
</dbReference>
<dbReference type="Gene3D" id="1.10.238.10">
    <property type="entry name" value="EF-hand"/>
    <property type="match status" value="1"/>
</dbReference>
<dbReference type="InterPro" id="IPR033883">
    <property type="entry name" value="C2_III"/>
</dbReference>
<dbReference type="InterPro" id="IPR022684">
    <property type="entry name" value="Calpain_cysteine_protease"/>
</dbReference>
<dbReference type="InterPro" id="IPR022682">
    <property type="entry name" value="Calpain_domain_III"/>
</dbReference>
<dbReference type="InterPro" id="IPR022683">
    <property type="entry name" value="Calpain_III"/>
</dbReference>
<dbReference type="InterPro" id="IPR036213">
    <property type="entry name" value="Calpain_III_sf"/>
</dbReference>
<dbReference type="InterPro" id="IPR011992">
    <property type="entry name" value="EF-hand-dom_pair"/>
</dbReference>
<dbReference type="InterPro" id="IPR018247">
    <property type="entry name" value="EF_Hand_1_Ca_BS"/>
</dbReference>
<dbReference type="InterPro" id="IPR002048">
    <property type="entry name" value="EF_hand_dom"/>
</dbReference>
<dbReference type="InterPro" id="IPR038765">
    <property type="entry name" value="Papain-like_cys_pep_sf"/>
</dbReference>
<dbReference type="InterPro" id="IPR000169">
    <property type="entry name" value="Pept_cys_AS"/>
</dbReference>
<dbReference type="InterPro" id="IPR001300">
    <property type="entry name" value="Peptidase_C2_calpain_cat"/>
</dbReference>
<dbReference type="PANTHER" id="PTHR10183">
    <property type="entry name" value="CALPAIN"/>
    <property type="match status" value="1"/>
</dbReference>
<dbReference type="PANTHER" id="PTHR10183:SF302">
    <property type="entry name" value="CALPAIN-14"/>
    <property type="match status" value="1"/>
</dbReference>
<dbReference type="Pfam" id="PF01067">
    <property type="entry name" value="Calpain_III"/>
    <property type="match status" value="1"/>
</dbReference>
<dbReference type="Pfam" id="PF00648">
    <property type="entry name" value="Peptidase_C2"/>
    <property type="match status" value="1"/>
</dbReference>
<dbReference type="PRINTS" id="PR00704">
    <property type="entry name" value="CALPAIN"/>
</dbReference>
<dbReference type="SMART" id="SM00720">
    <property type="entry name" value="calpain_III"/>
    <property type="match status" value="1"/>
</dbReference>
<dbReference type="SMART" id="SM00230">
    <property type="entry name" value="CysPc"/>
    <property type="match status" value="1"/>
</dbReference>
<dbReference type="SUPFAM" id="SSF49758">
    <property type="entry name" value="Calpain large subunit, middle domain (domain III)"/>
    <property type="match status" value="1"/>
</dbReference>
<dbReference type="SUPFAM" id="SSF54001">
    <property type="entry name" value="Cysteine proteinases"/>
    <property type="match status" value="1"/>
</dbReference>
<dbReference type="SUPFAM" id="SSF47473">
    <property type="entry name" value="EF-hand"/>
    <property type="match status" value="1"/>
</dbReference>
<dbReference type="PROSITE" id="PS50203">
    <property type="entry name" value="CALPAIN_CAT"/>
    <property type="match status" value="1"/>
</dbReference>
<dbReference type="PROSITE" id="PS00018">
    <property type="entry name" value="EF_HAND_1"/>
    <property type="match status" value="1"/>
</dbReference>
<dbReference type="PROSITE" id="PS50222">
    <property type="entry name" value="EF_HAND_2"/>
    <property type="match status" value="3"/>
</dbReference>
<dbReference type="PROSITE" id="PS00139">
    <property type="entry name" value="THIOL_PROTEASE_CYS"/>
    <property type="match status" value="1"/>
</dbReference>
<evidence type="ECO:0000250" key="1"/>
<evidence type="ECO:0000255" key="2">
    <source>
        <dbReference type="PROSITE-ProRule" id="PRU00239"/>
    </source>
</evidence>
<evidence type="ECO:0000255" key="3">
    <source>
        <dbReference type="PROSITE-ProRule" id="PRU00448"/>
    </source>
</evidence>
<evidence type="ECO:0000303" key="4">
    <source>
    </source>
</evidence>
<evidence type="ECO:0000305" key="5"/>
<accession>A8MX76</accession>
<accession>B3KRU9</accession>
<feature type="chain" id="PRO_0000341373" description="Calpain-14">
    <location>
        <begin position="1"/>
        <end position="684"/>
    </location>
</feature>
<feature type="domain" description="Calpain catalytic" evidence="2">
    <location>
        <begin position="43"/>
        <end position="336"/>
    </location>
</feature>
<feature type="domain" description="EF-hand 1" evidence="3">
    <location>
        <begin position="557"/>
        <end position="592"/>
    </location>
</feature>
<feature type="domain" description="EF-hand 2" evidence="3">
    <location>
        <begin position="586"/>
        <end position="621"/>
    </location>
</feature>
<feature type="domain" description="EF-hand 3" evidence="3">
    <location>
        <begin position="651"/>
        <end position="684"/>
    </location>
</feature>
<feature type="region of interest" description="Domain III">
    <location>
        <begin position="337"/>
        <end position="503"/>
    </location>
</feature>
<feature type="region of interest" description="Linker">
    <location>
        <begin position="504"/>
        <end position="517"/>
    </location>
</feature>
<feature type="region of interest" description="Domain IV">
    <location>
        <begin position="518"/>
        <end position="683"/>
    </location>
</feature>
<feature type="active site" evidence="1">
    <location>
        <position position="101"/>
    </location>
</feature>
<feature type="active site" evidence="1">
    <location>
        <position position="254"/>
    </location>
</feature>
<feature type="active site" evidence="1">
    <location>
        <position position="278"/>
    </location>
</feature>
<feature type="binding site" evidence="3">
    <location>
        <position position="570"/>
    </location>
    <ligand>
        <name>Ca(2+)</name>
        <dbReference type="ChEBI" id="CHEBI:29108"/>
    </ligand>
</feature>
<feature type="binding site" evidence="3">
    <location>
        <position position="572"/>
    </location>
    <ligand>
        <name>Ca(2+)</name>
        <dbReference type="ChEBI" id="CHEBI:29108"/>
    </ligand>
</feature>
<feature type="binding site" evidence="3">
    <location>
        <position position="574"/>
    </location>
    <ligand>
        <name>Ca(2+)</name>
        <dbReference type="ChEBI" id="CHEBI:29108"/>
    </ligand>
</feature>
<feature type="binding site" evidence="3">
    <location>
        <position position="576"/>
    </location>
    <ligand>
        <name>Ca(2+)</name>
        <dbReference type="ChEBI" id="CHEBI:29108"/>
    </ligand>
</feature>
<feature type="binding site" evidence="3">
    <location>
        <position position="581"/>
    </location>
    <ligand>
        <name>Ca(2+)</name>
        <dbReference type="ChEBI" id="CHEBI:29108"/>
    </ligand>
</feature>
<feature type="splice variant" id="VSP_034268" description="In isoform 2." evidence="4">
    <location>
        <begin position="1"/>
        <end position="176"/>
    </location>
</feature>
<feature type="splice variant" id="VSP_034269" description="In isoform 2." evidence="4">
    <original>LLEKAYAK</original>
    <variation>MLASSGSG</variation>
    <location>
        <begin position="177"/>
        <end position="184"/>
    </location>
</feature>
<gene>
    <name type="primary">CAPN14</name>
</gene>